<organism>
    <name type="scientific">Schizosaccharomyces pombe (strain 972 / ATCC 24843)</name>
    <name type="common">Fission yeast</name>
    <dbReference type="NCBI Taxonomy" id="284812"/>
    <lineage>
        <taxon>Eukaryota</taxon>
        <taxon>Fungi</taxon>
        <taxon>Dikarya</taxon>
        <taxon>Ascomycota</taxon>
        <taxon>Taphrinomycotina</taxon>
        <taxon>Schizosaccharomycetes</taxon>
        <taxon>Schizosaccharomycetales</taxon>
        <taxon>Schizosaccharomycetaceae</taxon>
        <taxon>Schizosaccharomyces</taxon>
    </lineage>
</organism>
<protein>
    <recommendedName>
        <fullName>Late secretory pathway protein avl9</fullName>
    </recommendedName>
</protein>
<comment type="function">
    <text evidence="1">Functions in the late secretory pathway. Required for the generation of secretory vesicles as well as for actin polarization and polarized growth (By similarity).</text>
</comment>
<comment type="subcellular location">
    <subcellularLocation>
        <location evidence="3">Cytoplasm</location>
    </subcellularLocation>
</comment>
<comment type="similarity">
    <text evidence="4">Belongs to the AVL9 family.</text>
</comment>
<evidence type="ECO:0000250" key="1"/>
<evidence type="ECO:0000255" key="2">
    <source>
        <dbReference type="PROSITE-ProRule" id="PRU00304"/>
    </source>
</evidence>
<evidence type="ECO:0000269" key="3">
    <source>
    </source>
</evidence>
<evidence type="ECO:0000305" key="4"/>
<dbReference type="EMBL" id="CU329670">
    <property type="protein sequence ID" value="CAB16239.2"/>
    <property type="molecule type" value="Genomic_DNA"/>
</dbReference>
<dbReference type="PIR" id="T38307">
    <property type="entry name" value="T38307"/>
</dbReference>
<dbReference type="RefSeq" id="NP_593804.1">
    <property type="nucleotide sequence ID" value="NM_001019233.2"/>
</dbReference>
<dbReference type="FunCoup" id="O13943">
    <property type="interactions" value="516"/>
</dbReference>
<dbReference type="STRING" id="284812.O13943"/>
<dbReference type="iPTMnet" id="O13943"/>
<dbReference type="PaxDb" id="4896-SPAC23H3.14.1"/>
<dbReference type="EnsemblFungi" id="SPAC23H3.14.1">
    <property type="protein sequence ID" value="SPAC23H3.14.1:pep"/>
    <property type="gene ID" value="SPAC23H3.14"/>
</dbReference>
<dbReference type="GeneID" id="2541794"/>
<dbReference type="KEGG" id="spo:2541794"/>
<dbReference type="PomBase" id="SPAC23H3.14">
    <property type="gene designation" value="avl9"/>
</dbReference>
<dbReference type="VEuPathDB" id="FungiDB:SPAC23H3.14"/>
<dbReference type="eggNOG" id="KOG3823">
    <property type="taxonomic scope" value="Eukaryota"/>
</dbReference>
<dbReference type="HOGENOM" id="CLU_009066_3_1_1"/>
<dbReference type="InParanoid" id="O13943"/>
<dbReference type="OMA" id="IRTQFRV"/>
<dbReference type="PhylomeDB" id="O13943"/>
<dbReference type="PRO" id="PR:O13943"/>
<dbReference type="Proteomes" id="UP000002485">
    <property type="component" value="Chromosome I"/>
</dbReference>
<dbReference type="GO" id="GO:0005737">
    <property type="term" value="C:cytoplasm"/>
    <property type="evidence" value="ECO:0007005"/>
    <property type="project" value="PomBase"/>
</dbReference>
<dbReference type="GO" id="GO:0005768">
    <property type="term" value="C:endosome"/>
    <property type="evidence" value="ECO:0000250"/>
    <property type="project" value="PomBase"/>
</dbReference>
<dbReference type="GO" id="GO:0006892">
    <property type="term" value="P:post-Golgi vesicle-mediated transport"/>
    <property type="evidence" value="ECO:0000266"/>
    <property type="project" value="PomBase"/>
</dbReference>
<dbReference type="InterPro" id="IPR018307">
    <property type="entry name" value="ABL9/DENND6_dom"/>
</dbReference>
<dbReference type="InterPro" id="IPR051731">
    <property type="entry name" value="DENND11/AVL9_GEFs"/>
</dbReference>
<dbReference type="InterPro" id="IPR037516">
    <property type="entry name" value="Tripartite_DENN"/>
</dbReference>
<dbReference type="PANTHER" id="PTHR31017:SF1">
    <property type="entry name" value="LATE SECRETORY PATHWAY PROTEIN AVL9 HOMOLOG"/>
    <property type="match status" value="1"/>
</dbReference>
<dbReference type="PANTHER" id="PTHR31017">
    <property type="entry name" value="LATE SECRETORY PATHWAY PROTEIN AVL9-RELATED"/>
    <property type="match status" value="1"/>
</dbReference>
<dbReference type="Pfam" id="PF09794">
    <property type="entry name" value="Avl9"/>
    <property type="match status" value="1"/>
</dbReference>
<dbReference type="PROSITE" id="PS50211">
    <property type="entry name" value="DENN"/>
    <property type="match status" value="1"/>
</dbReference>
<gene>
    <name type="primary">avl9</name>
    <name type="ORF">SPAC23H3.14</name>
</gene>
<feature type="chain" id="PRO_0000353134" description="Late secretory pathway protein avl9">
    <location>
        <begin position="1"/>
        <end position="469"/>
    </location>
</feature>
<feature type="domain" description="uDENN" evidence="2">
    <location>
        <begin position="11"/>
        <end position="150"/>
    </location>
</feature>
<feature type="domain" description="cDENN" evidence="2">
    <location>
        <begin position="163"/>
        <end position="332"/>
    </location>
</feature>
<feature type="domain" description="dDENN" evidence="2">
    <location>
        <begin position="334"/>
        <end position="437"/>
    </location>
</feature>
<sequence>MDENGASFQVLCLATIGFHHLRGPEIEHLFPESMDFPKEWSILPFLSLPDGAHSSEKDFVYFTLPFPNDEGTVFGLSCTRQLNASSLKNIPSDVTRSSVQKAVVVITTSPPFGHIKDNLDIVTNAYFSQGDFSNLDVLRDFFHVLTRKEQDVHIALNINLKSFLCEWRQNALVLLKVLLLGKRILVYDKSAERLGNFQYSLLSLIPCMMSHLQDVSSPSAHSLEKSLHKPASLQTSDKRSLLAYTGFPLIIFGEGSMFSPYTPLQLVHVLEAKSSTSWLAGTTNTLIMLNQNKMAEVIVRSDTHQIEFVDPTIKNLTSLTYTDKSWMEDIISRVESSLEMELPGFEGSDDWIRNQFELYIFGMLATVKYYNFLKKQDDSILSQYHYLPSTSCISDYGETFLLEWMKTNTFRIWNNIADDDLFDVILPKHPCKEEHKVPISARIATLFSAVKITPKSRDGEDEGSKEPAV</sequence>
<reference key="1">
    <citation type="journal article" date="2002" name="Nature">
        <title>The genome sequence of Schizosaccharomyces pombe.</title>
        <authorList>
            <person name="Wood V."/>
            <person name="Gwilliam R."/>
            <person name="Rajandream M.A."/>
            <person name="Lyne M.H."/>
            <person name="Lyne R."/>
            <person name="Stewart A."/>
            <person name="Sgouros J.G."/>
            <person name="Peat N."/>
            <person name="Hayles J."/>
            <person name="Baker S.G."/>
            <person name="Basham D."/>
            <person name="Bowman S."/>
            <person name="Brooks K."/>
            <person name="Brown D."/>
            <person name="Brown S."/>
            <person name="Chillingworth T."/>
            <person name="Churcher C.M."/>
            <person name="Collins M."/>
            <person name="Connor R."/>
            <person name="Cronin A."/>
            <person name="Davis P."/>
            <person name="Feltwell T."/>
            <person name="Fraser A."/>
            <person name="Gentles S."/>
            <person name="Goble A."/>
            <person name="Hamlin N."/>
            <person name="Harris D.E."/>
            <person name="Hidalgo J."/>
            <person name="Hodgson G."/>
            <person name="Holroyd S."/>
            <person name="Hornsby T."/>
            <person name="Howarth S."/>
            <person name="Huckle E.J."/>
            <person name="Hunt S."/>
            <person name="Jagels K."/>
            <person name="James K.D."/>
            <person name="Jones L."/>
            <person name="Jones M."/>
            <person name="Leather S."/>
            <person name="McDonald S."/>
            <person name="McLean J."/>
            <person name="Mooney P."/>
            <person name="Moule S."/>
            <person name="Mungall K.L."/>
            <person name="Murphy L.D."/>
            <person name="Niblett D."/>
            <person name="Odell C."/>
            <person name="Oliver K."/>
            <person name="O'Neil S."/>
            <person name="Pearson D."/>
            <person name="Quail M.A."/>
            <person name="Rabbinowitsch E."/>
            <person name="Rutherford K.M."/>
            <person name="Rutter S."/>
            <person name="Saunders D."/>
            <person name="Seeger K."/>
            <person name="Sharp S."/>
            <person name="Skelton J."/>
            <person name="Simmonds M.N."/>
            <person name="Squares R."/>
            <person name="Squares S."/>
            <person name="Stevens K."/>
            <person name="Taylor K."/>
            <person name="Taylor R.G."/>
            <person name="Tivey A."/>
            <person name="Walsh S.V."/>
            <person name="Warren T."/>
            <person name="Whitehead S."/>
            <person name="Woodward J.R."/>
            <person name="Volckaert G."/>
            <person name="Aert R."/>
            <person name="Robben J."/>
            <person name="Grymonprez B."/>
            <person name="Weltjens I."/>
            <person name="Vanstreels E."/>
            <person name="Rieger M."/>
            <person name="Schaefer M."/>
            <person name="Mueller-Auer S."/>
            <person name="Gabel C."/>
            <person name="Fuchs M."/>
            <person name="Duesterhoeft A."/>
            <person name="Fritzc C."/>
            <person name="Holzer E."/>
            <person name="Moestl D."/>
            <person name="Hilbert H."/>
            <person name="Borzym K."/>
            <person name="Langer I."/>
            <person name="Beck A."/>
            <person name="Lehrach H."/>
            <person name="Reinhardt R."/>
            <person name="Pohl T.M."/>
            <person name="Eger P."/>
            <person name="Zimmermann W."/>
            <person name="Wedler H."/>
            <person name="Wambutt R."/>
            <person name="Purnelle B."/>
            <person name="Goffeau A."/>
            <person name="Cadieu E."/>
            <person name="Dreano S."/>
            <person name="Gloux S."/>
            <person name="Lelaure V."/>
            <person name="Mottier S."/>
            <person name="Galibert F."/>
            <person name="Aves S.J."/>
            <person name="Xiang Z."/>
            <person name="Hunt C."/>
            <person name="Moore K."/>
            <person name="Hurst S.M."/>
            <person name="Lucas M."/>
            <person name="Rochet M."/>
            <person name="Gaillardin C."/>
            <person name="Tallada V.A."/>
            <person name="Garzon A."/>
            <person name="Thode G."/>
            <person name="Daga R.R."/>
            <person name="Cruzado L."/>
            <person name="Jimenez J."/>
            <person name="Sanchez M."/>
            <person name="del Rey F."/>
            <person name="Benito J."/>
            <person name="Dominguez A."/>
            <person name="Revuelta J.L."/>
            <person name="Moreno S."/>
            <person name="Armstrong J."/>
            <person name="Forsburg S.L."/>
            <person name="Cerutti L."/>
            <person name="Lowe T."/>
            <person name="McCombie W.R."/>
            <person name="Paulsen I."/>
            <person name="Potashkin J."/>
            <person name="Shpakovski G.V."/>
            <person name="Ussery D."/>
            <person name="Barrell B.G."/>
            <person name="Nurse P."/>
        </authorList>
    </citation>
    <scope>NUCLEOTIDE SEQUENCE [LARGE SCALE GENOMIC DNA]</scope>
    <source>
        <strain>972 / ATCC 24843</strain>
    </source>
</reference>
<reference key="2">
    <citation type="journal article" date="2006" name="Nat. Biotechnol.">
        <title>ORFeome cloning and global analysis of protein localization in the fission yeast Schizosaccharomyces pombe.</title>
        <authorList>
            <person name="Matsuyama A."/>
            <person name="Arai R."/>
            <person name="Yashiroda Y."/>
            <person name="Shirai A."/>
            <person name="Kamata A."/>
            <person name="Sekido S."/>
            <person name="Kobayashi Y."/>
            <person name="Hashimoto A."/>
            <person name="Hamamoto M."/>
            <person name="Hiraoka Y."/>
            <person name="Horinouchi S."/>
            <person name="Yoshida M."/>
        </authorList>
    </citation>
    <scope>SUBCELLULAR LOCATION [LARGE SCALE ANALYSIS]</scope>
</reference>
<name>AVL9_SCHPO</name>
<accession>O13943</accession>
<keyword id="KW-0963">Cytoplasm</keyword>
<keyword id="KW-1185">Reference proteome</keyword>
<proteinExistence type="inferred from homology"/>